<proteinExistence type="inferred from homology"/>
<comment type="catalytic activity">
    <reaction evidence="1">
        <text>D-glucose + ATP = D-glucose 6-phosphate + ADP + H(+)</text>
        <dbReference type="Rhea" id="RHEA:17825"/>
        <dbReference type="ChEBI" id="CHEBI:4167"/>
        <dbReference type="ChEBI" id="CHEBI:15378"/>
        <dbReference type="ChEBI" id="CHEBI:30616"/>
        <dbReference type="ChEBI" id="CHEBI:61548"/>
        <dbReference type="ChEBI" id="CHEBI:456216"/>
        <dbReference type="EC" id="2.7.1.2"/>
    </reaction>
</comment>
<comment type="subcellular location">
    <subcellularLocation>
        <location evidence="1">Cytoplasm</location>
    </subcellularLocation>
</comment>
<comment type="similarity">
    <text evidence="1">Belongs to the bacterial glucokinase family.</text>
</comment>
<accession>Q668N7</accession>
<gene>
    <name evidence="1" type="primary">glk</name>
    <name type="ordered locus">YPTB2700</name>
</gene>
<evidence type="ECO:0000255" key="1">
    <source>
        <dbReference type="HAMAP-Rule" id="MF_00524"/>
    </source>
</evidence>
<feature type="chain" id="PRO_0000215146" description="Glucokinase">
    <location>
        <begin position="1"/>
        <end position="323"/>
    </location>
</feature>
<feature type="binding site" evidence="1">
    <location>
        <begin position="8"/>
        <end position="13"/>
    </location>
    <ligand>
        <name>ATP</name>
        <dbReference type="ChEBI" id="CHEBI:30616"/>
    </ligand>
</feature>
<protein>
    <recommendedName>
        <fullName evidence="1">Glucokinase</fullName>
        <ecNumber evidence="1">2.7.1.2</ecNumber>
    </recommendedName>
    <alternativeName>
        <fullName evidence="1">Glucose kinase</fullName>
    </alternativeName>
</protein>
<reference key="1">
    <citation type="journal article" date="2004" name="Proc. Natl. Acad. Sci. U.S.A.">
        <title>Insights into the evolution of Yersinia pestis through whole-genome comparison with Yersinia pseudotuberculosis.</title>
        <authorList>
            <person name="Chain P.S.G."/>
            <person name="Carniel E."/>
            <person name="Larimer F.W."/>
            <person name="Lamerdin J."/>
            <person name="Stoutland P.O."/>
            <person name="Regala W.M."/>
            <person name="Georgescu A.M."/>
            <person name="Vergez L.M."/>
            <person name="Land M.L."/>
            <person name="Motin V.L."/>
            <person name="Brubaker R.R."/>
            <person name="Fowler J."/>
            <person name="Hinnebusch J."/>
            <person name="Marceau M."/>
            <person name="Medigue C."/>
            <person name="Simonet M."/>
            <person name="Chenal-Francisque V."/>
            <person name="Souza B."/>
            <person name="Dacheux D."/>
            <person name="Elliott J.M."/>
            <person name="Derbise A."/>
            <person name="Hauser L.J."/>
            <person name="Garcia E."/>
        </authorList>
    </citation>
    <scope>NUCLEOTIDE SEQUENCE [LARGE SCALE GENOMIC DNA]</scope>
    <source>
        <strain>IP32953</strain>
    </source>
</reference>
<keyword id="KW-0067">ATP-binding</keyword>
<keyword id="KW-0963">Cytoplasm</keyword>
<keyword id="KW-0324">Glycolysis</keyword>
<keyword id="KW-0418">Kinase</keyword>
<keyword id="KW-0547">Nucleotide-binding</keyword>
<keyword id="KW-0808">Transferase</keyword>
<dbReference type="EC" id="2.7.1.2" evidence="1"/>
<dbReference type="EMBL" id="BX936398">
    <property type="protein sequence ID" value="CAH21938.1"/>
    <property type="molecule type" value="Genomic_DNA"/>
</dbReference>
<dbReference type="RefSeq" id="WP_002211615.1">
    <property type="nucleotide sequence ID" value="NZ_CP009712.1"/>
</dbReference>
<dbReference type="SMR" id="Q668N7"/>
<dbReference type="GeneID" id="57975727"/>
<dbReference type="KEGG" id="ypo:BZ17_3937"/>
<dbReference type="KEGG" id="yps:YPTB2700"/>
<dbReference type="PATRIC" id="fig|273123.14.peg.4131"/>
<dbReference type="Proteomes" id="UP000001011">
    <property type="component" value="Chromosome"/>
</dbReference>
<dbReference type="GO" id="GO:0005829">
    <property type="term" value="C:cytosol"/>
    <property type="evidence" value="ECO:0007669"/>
    <property type="project" value="TreeGrafter"/>
</dbReference>
<dbReference type="GO" id="GO:0005524">
    <property type="term" value="F:ATP binding"/>
    <property type="evidence" value="ECO:0007669"/>
    <property type="project" value="UniProtKB-UniRule"/>
</dbReference>
<dbReference type="GO" id="GO:0005536">
    <property type="term" value="F:D-glucose binding"/>
    <property type="evidence" value="ECO:0007669"/>
    <property type="project" value="InterPro"/>
</dbReference>
<dbReference type="GO" id="GO:0004340">
    <property type="term" value="F:glucokinase activity"/>
    <property type="evidence" value="ECO:0007669"/>
    <property type="project" value="UniProtKB-UniRule"/>
</dbReference>
<dbReference type="GO" id="GO:0006096">
    <property type="term" value="P:glycolytic process"/>
    <property type="evidence" value="ECO:0007669"/>
    <property type="project" value="UniProtKB-UniRule"/>
</dbReference>
<dbReference type="CDD" id="cd24008">
    <property type="entry name" value="ASKHA_NBD_GLK"/>
    <property type="match status" value="1"/>
</dbReference>
<dbReference type="FunFam" id="3.30.420.40:FF:000045">
    <property type="entry name" value="Glucokinase"/>
    <property type="match status" value="1"/>
</dbReference>
<dbReference type="FunFam" id="3.40.367.20:FF:000002">
    <property type="entry name" value="Glucokinase"/>
    <property type="match status" value="1"/>
</dbReference>
<dbReference type="Gene3D" id="3.30.420.40">
    <property type="match status" value="1"/>
</dbReference>
<dbReference type="Gene3D" id="3.40.367.20">
    <property type="match status" value="1"/>
</dbReference>
<dbReference type="HAMAP" id="MF_00524">
    <property type="entry name" value="Glucokinase"/>
    <property type="match status" value="1"/>
</dbReference>
<dbReference type="InterPro" id="IPR043129">
    <property type="entry name" value="ATPase_NBD"/>
</dbReference>
<dbReference type="InterPro" id="IPR050201">
    <property type="entry name" value="Bacterial_glucokinase"/>
</dbReference>
<dbReference type="InterPro" id="IPR003836">
    <property type="entry name" value="Glucokinase"/>
</dbReference>
<dbReference type="NCBIfam" id="TIGR00749">
    <property type="entry name" value="glk"/>
    <property type="match status" value="1"/>
</dbReference>
<dbReference type="NCBIfam" id="NF001414">
    <property type="entry name" value="PRK00292.1-1"/>
    <property type="match status" value="1"/>
</dbReference>
<dbReference type="NCBIfam" id="NF001416">
    <property type="entry name" value="PRK00292.1-3"/>
    <property type="match status" value="1"/>
</dbReference>
<dbReference type="NCBIfam" id="NF009073">
    <property type="entry name" value="PRK12408.1"/>
    <property type="match status" value="1"/>
</dbReference>
<dbReference type="PANTHER" id="PTHR47690">
    <property type="entry name" value="GLUCOKINASE"/>
    <property type="match status" value="1"/>
</dbReference>
<dbReference type="PANTHER" id="PTHR47690:SF1">
    <property type="entry name" value="GLUCOKINASE"/>
    <property type="match status" value="1"/>
</dbReference>
<dbReference type="Pfam" id="PF02685">
    <property type="entry name" value="Glucokinase"/>
    <property type="match status" value="1"/>
</dbReference>
<dbReference type="SUPFAM" id="SSF53067">
    <property type="entry name" value="Actin-like ATPase domain"/>
    <property type="match status" value="1"/>
</dbReference>
<organism>
    <name type="scientific">Yersinia pseudotuberculosis serotype I (strain IP32953)</name>
    <dbReference type="NCBI Taxonomy" id="273123"/>
    <lineage>
        <taxon>Bacteria</taxon>
        <taxon>Pseudomonadati</taxon>
        <taxon>Pseudomonadota</taxon>
        <taxon>Gammaproteobacteria</taxon>
        <taxon>Enterobacterales</taxon>
        <taxon>Yersiniaceae</taxon>
        <taxon>Yersinia</taxon>
    </lineage>
</organism>
<sequence length="323" mass="34664">MTTYALVGDVGGTNARLALCAVATGEILQAKTYSGLEYESLEDVIKQYLSEHQAKVTDACIAIACPITGDWVAMTNHTWAFSIAAMQQNLGLDHLEVINDFTAVSMAIPVLPAQDVLQFGGTQPQPGKPVAVYGAGTGLGVAHLVNVDRRWISLAGEGGHVDFAPNSEEEDQILAVLRQELGHVSAERVLSGPGLVNLYRAIVISDARLPEKLAPKDITARALADSCTDCRRALSLFCVIMGRFGGNLALNLSTFGGVYIAGGIVPRFMEFFKASGFRAAFEDKGRFKDFLQDIPVYMITHPQPGLLGAGAYLRQKLGYELSS</sequence>
<name>GLK_YERPS</name>